<name>SSUB2_PSE14</name>
<proteinExistence type="inferred from homology"/>
<reference key="1">
    <citation type="journal article" date="2005" name="J. Bacteriol.">
        <title>Whole-genome sequence analysis of Pseudomonas syringae pv. phaseolicola 1448A reveals divergence among pathovars in genes involved in virulence and transposition.</title>
        <authorList>
            <person name="Joardar V."/>
            <person name="Lindeberg M."/>
            <person name="Jackson R.W."/>
            <person name="Selengut J."/>
            <person name="Dodson R."/>
            <person name="Brinkac L.M."/>
            <person name="Daugherty S.C."/>
            <person name="DeBoy R.T."/>
            <person name="Durkin A.S."/>
            <person name="Gwinn Giglio M."/>
            <person name="Madupu R."/>
            <person name="Nelson W.C."/>
            <person name="Rosovitz M.J."/>
            <person name="Sullivan S.A."/>
            <person name="Crabtree J."/>
            <person name="Creasy T."/>
            <person name="Davidsen T.M."/>
            <person name="Haft D.H."/>
            <person name="Zafar N."/>
            <person name="Zhou L."/>
            <person name="Halpin R."/>
            <person name="Holley T."/>
            <person name="Khouri H.M."/>
            <person name="Feldblyum T.V."/>
            <person name="White O."/>
            <person name="Fraser C.M."/>
            <person name="Chatterjee A.K."/>
            <person name="Cartinhour S."/>
            <person name="Schneider D."/>
            <person name="Mansfield J.W."/>
            <person name="Collmer A."/>
            <person name="Buell R."/>
        </authorList>
    </citation>
    <scope>NUCLEOTIDE SEQUENCE [LARGE SCALE GENOMIC DNA]</scope>
    <source>
        <strain>1448A / Race 6</strain>
    </source>
</reference>
<gene>
    <name evidence="1" type="primary">ssuB2</name>
    <name type="ordered locus">PSPPH_3608</name>
</gene>
<protein>
    <recommendedName>
        <fullName evidence="1">Aliphatic sulfonates import ATP-binding protein SsuB 2</fullName>
        <ecNumber evidence="1">7.6.2.14</ecNumber>
    </recommendedName>
</protein>
<dbReference type="EC" id="7.6.2.14" evidence="1"/>
<dbReference type="EMBL" id="CP000058">
    <property type="protein sequence ID" value="AAZ36855.1"/>
    <property type="molecule type" value="Genomic_DNA"/>
</dbReference>
<dbReference type="RefSeq" id="WP_004657395.1">
    <property type="nucleotide sequence ID" value="NC_005773.3"/>
</dbReference>
<dbReference type="SMR" id="Q48FT0"/>
<dbReference type="KEGG" id="psp:PSPPH_3608"/>
<dbReference type="eggNOG" id="COG1116">
    <property type="taxonomic scope" value="Bacteria"/>
</dbReference>
<dbReference type="HOGENOM" id="CLU_000604_1_22_6"/>
<dbReference type="Proteomes" id="UP000000551">
    <property type="component" value="Chromosome"/>
</dbReference>
<dbReference type="GO" id="GO:0005886">
    <property type="term" value="C:plasma membrane"/>
    <property type="evidence" value="ECO:0007669"/>
    <property type="project" value="UniProtKB-SubCell"/>
</dbReference>
<dbReference type="GO" id="GO:0005524">
    <property type="term" value="F:ATP binding"/>
    <property type="evidence" value="ECO:0007669"/>
    <property type="project" value="UniProtKB-KW"/>
</dbReference>
<dbReference type="GO" id="GO:0016887">
    <property type="term" value="F:ATP hydrolysis activity"/>
    <property type="evidence" value="ECO:0007669"/>
    <property type="project" value="InterPro"/>
</dbReference>
<dbReference type="Gene3D" id="3.40.50.300">
    <property type="entry name" value="P-loop containing nucleotide triphosphate hydrolases"/>
    <property type="match status" value="1"/>
</dbReference>
<dbReference type="InterPro" id="IPR003593">
    <property type="entry name" value="AAA+_ATPase"/>
</dbReference>
<dbReference type="InterPro" id="IPR003439">
    <property type="entry name" value="ABC_transporter-like_ATP-bd"/>
</dbReference>
<dbReference type="InterPro" id="IPR017871">
    <property type="entry name" value="ABC_transporter-like_CS"/>
</dbReference>
<dbReference type="InterPro" id="IPR050166">
    <property type="entry name" value="ABC_transporter_ATP-bind"/>
</dbReference>
<dbReference type="InterPro" id="IPR027417">
    <property type="entry name" value="P-loop_NTPase"/>
</dbReference>
<dbReference type="PANTHER" id="PTHR42788:SF17">
    <property type="entry name" value="ALIPHATIC SULFONATES IMPORT ATP-BINDING PROTEIN SSUB"/>
    <property type="match status" value="1"/>
</dbReference>
<dbReference type="PANTHER" id="PTHR42788">
    <property type="entry name" value="TAURINE IMPORT ATP-BINDING PROTEIN-RELATED"/>
    <property type="match status" value="1"/>
</dbReference>
<dbReference type="Pfam" id="PF00005">
    <property type="entry name" value="ABC_tran"/>
    <property type="match status" value="1"/>
</dbReference>
<dbReference type="SMART" id="SM00382">
    <property type="entry name" value="AAA"/>
    <property type="match status" value="1"/>
</dbReference>
<dbReference type="SUPFAM" id="SSF52540">
    <property type="entry name" value="P-loop containing nucleoside triphosphate hydrolases"/>
    <property type="match status" value="1"/>
</dbReference>
<dbReference type="PROSITE" id="PS00211">
    <property type="entry name" value="ABC_TRANSPORTER_1"/>
    <property type="match status" value="1"/>
</dbReference>
<dbReference type="PROSITE" id="PS50893">
    <property type="entry name" value="ABC_TRANSPORTER_2"/>
    <property type="match status" value="1"/>
</dbReference>
<dbReference type="PROSITE" id="PS51291">
    <property type="entry name" value="SSUB"/>
    <property type="match status" value="1"/>
</dbReference>
<keyword id="KW-0067">ATP-binding</keyword>
<keyword id="KW-0997">Cell inner membrane</keyword>
<keyword id="KW-1003">Cell membrane</keyword>
<keyword id="KW-0472">Membrane</keyword>
<keyword id="KW-0547">Nucleotide-binding</keyword>
<keyword id="KW-1278">Translocase</keyword>
<keyword id="KW-0813">Transport</keyword>
<feature type="chain" id="PRO_0000279938" description="Aliphatic sulfonates import ATP-binding protein SsuB 2">
    <location>
        <begin position="1"/>
        <end position="268"/>
    </location>
</feature>
<feature type="domain" description="ABC transporter" evidence="1">
    <location>
        <begin position="16"/>
        <end position="230"/>
    </location>
</feature>
<feature type="binding site" evidence="1">
    <location>
        <begin position="48"/>
        <end position="55"/>
    </location>
    <ligand>
        <name>ATP</name>
        <dbReference type="ChEBI" id="CHEBI:30616"/>
    </ligand>
</feature>
<comment type="function">
    <text evidence="1">Part of the ABC transporter complex SsuABC involved in aliphatic sulfonates import. Responsible for energy coupling to the transport system.</text>
</comment>
<comment type="catalytic activity">
    <reaction evidence="1">
        <text>ATP + H2O + aliphatic sulfonate-[sulfonate-binding protein]Side 1 = ADP + phosphate + aliphatic sulfonateSide 2 + [sulfonate-binding protein]Side 1.</text>
        <dbReference type="EC" id="7.6.2.14"/>
    </reaction>
</comment>
<comment type="subunit">
    <text evidence="1">The complex is composed of two ATP-binding proteins (SsuB), two transmembrane proteins (SsuC) and a solute-binding protein (SsuA).</text>
</comment>
<comment type="subcellular location">
    <subcellularLocation>
        <location evidence="1">Cell inner membrane</location>
        <topology evidence="1">Peripheral membrane protein</topology>
    </subcellularLocation>
</comment>
<comment type="similarity">
    <text evidence="1">Belongs to the ABC transporter superfamily. Aliphatic sulfonates importer (TC 3.A.1.17.2) family.</text>
</comment>
<evidence type="ECO:0000255" key="1">
    <source>
        <dbReference type="HAMAP-Rule" id="MF_01724"/>
    </source>
</evidence>
<accession>Q48FT0</accession>
<organism>
    <name type="scientific">Pseudomonas savastanoi pv. phaseolicola (strain 1448A / Race 6)</name>
    <name type="common">Pseudomonas syringae pv. phaseolicola (strain 1448A / Race 6)</name>
    <dbReference type="NCBI Taxonomy" id="264730"/>
    <lineage>
        <taxon>Bacteria</taxon>
        <taxon>Pseudomonadati</taxon>
        <taxon>Pseudomonadota</taxon>
        <taxon>Gammaproteobacteria</taxon>
        <taxon>Pseudomonadales</taxon>
        <taxon>Pseudomonadaceae</taxon>
        <taxon>Pseudomonas</taxon>
    </lineage>
</organism>
<sequence>MATLELRNTSSVTPPVQLRNVVRQFGPQRVIDGLDLDIAAGEFVALLGASGSGKTTLLRTLAGLDDIDSGELRVPVARAAVFQEPRLMPWKSAWKNVVLGLRINDAKARAEAALTEVGLAHRLNAFPATLSGGEAQRVALARGLVREPKLLLLDEPFAALDALTRIRMHQLIIDLWRKHTPAVLLVTHDVDEAILLADRVIVLADGKLADDIRVDLPRQRDSGQAGFQSIRSRLLGLLGVKTQAADTATQEPARDVTLSALRRFANAR</sequence>